<proteinExistence type="evidence at protein level"/>
<name>YECN_ECOLI</name>
<keyword id="KW-0997">Cell inner membrane</keyword>
<keyword id="KW-1003">Cell membrane</keyword>
<keyword id="KW-0472">Membrane</keyword>
<keyword id="KW-1185">Reference proteome</keyword>
<keyword id="KW-0812">Transmembrane</keyword>
<keyword id="KW-1133">Transmembrane helix</keyword>
<dbReference type="EMBL" id="U00096">
    <property type="protein sequence ID" value="AAC74939.2"/>
    <property type="molecule type" value="Genomic_DNA"/>
</dbReference>
<dbReference type="EMBL" id="AP009048">
    <property type="protein sequence ID" value="BAE76548.1"/>
    <property type="molecule type" value="Genomic_DNA"/>
</dbReference>
<dbReference type="RefSeq" id="NP_416383.4">
    <property type="nucleotide sequence ID" value="NC_000913.3"/>
</dbReference>
<dbReference type="RefSeq" id="WP_000252980.1">
    <property type="nucleotide sequence ID" value="NZ_SSZK01000001.1"/>
</dbReference>
<dbReference type="SMR" id="P64515"/>
<dbReference type="BioGRID" id="4263501">
    <property type="interactions" value="7"/>
</dbReference>
<dbReference type="FunCoup" id="P64515">
    <property type="interactions" value="62"/>
</dbReference>
<dbReference type="STRING" id="511145.b1869"/>
<dbReference type="jPOST" id="P64515"/>
<dbReference type="PaxDb" id="511145-b1869"/>
<dbReference type="EnsemblBacteria" id="AAC74939">
    <property type="protein sequence ID" value="AAC74939"/>
    <property type="gene ID" value="b1869"/>
</dbReference>
<dbReference type="GeneID" id="946381"/>
<dbReference type="KEGG" id="ecj:JW5308"/>
<dbReference type="KEGG" id="eco:b1869"/>
<dbReference type="KEGG" id="ecoc:C3026_10640"/>
<dbReference type="PATRIC" id="fig|511145.12.peg.1948"/>
<dbReference type="EchoBASE" id="EB3786"/>
<dbReference type="eggNOG" id="COG3788">
    <property type="taxonomic scope" value="Bacteria"/>
</dbReference>
<dbReference type="HOGENOM" id="CLU_134926_1_0_6"/>
<dbReference type="InParanoid" id="P64515"/>
<dbReference type="OMA" id="LPWEQIF"/>
<dbReference type="OrthoDB" id="8537976at2"/>
<dbReference type="PhylomeDB" id="P64515"/>
<dbReference type="BioCyc" id="EcoCyc:G7019-MONOMER"/>
<dbReference type="PRO" id="PR:P64515"/>
<dbReference type="Proteomes" id="UP000000625">
    <property type="component" value="Chromosome"/>
</dbReference>
<dbReference type="GO" id="GO:0016020">
    <property type="term" value="C:membrane"/>
    <property type="evidence" value="ECO:0000318"/>
    <property type="project" value="GO_Central"/>
</dbReference>
<dbReference type="GO" id="GO:0005886">
    <property type="term" value="C:plasma membrane"/>
    <property type="evidence" value="ECO:0000314"/>
    <property type="project" value="EcoCyc"/>
</dbReference>
<dbReference type="FunFam" id="1.20.120.550:FF:000001">
    <property type="entry name" value="Inner membrane protein yecN"/>
    <property type="match status" value="1"/>
</dbReference>
<dbReference type="Gene3D" id="1.20.120.550">
    <property type="entry name" value="Membrane associated eicosanoid/glutathione metabolism-like domain"/>
    <property type="match status" value="1"/>
</dbReference>
<dbReference type="InterPro" id="IPR023352">
    <property type="entry name" value="MAPEG-like_dom_sf"/>
</dbReference>
<dbReference type="InterPro" id="IPR001129">
    <property type="entry name" value="Membr-assoc_MAPEG"/>
</dbReference>
<dbReference type="PANTHER" id="PTHR35814">
    <property type="match status" value="1"/>
</dbReference>
<dbReference type="PANTHER" id="PTHR35814:SF1">
    <property type="entry name" value="GLUTATHIONE S-TRANSFERASE-RELATED"/>
    <property type="match status" value="1"/>
</dbReference>
<dbReference type="Pfam" id="PF01124">
    <property type="entry name" value="MAPEG"/>
    <property type="match status" value="1"/>
</dbReference>
<dbReference type="SUPFAM" id="SSF161084">
    <property type="entry name" value="MAPEG domain-like"/>
    <property type="match status" value="1"/>
</dbReference>
<comment type="subcellular location">
    <subcellularLocation>
        <location>Cell inner membrane</location>
        <topology>Single-pass membrane protein</topology>
    </subcellularLocation>
</comment>
<organism>
    <name type="scientific">Escherichia coli (strain K12)</name>
    <dbReference type="NCBI Taxonomy" id="83333"/>
    <lineage>
        <taxon>Bacteria</taxon>
        <taxon>Pseudomonadati</taxon>
        <taxon>Pseudomonadota</taxon>
        <taxon>Gammaproteobacteria</taxon>
        <taxon>Enterobacterales</taxon>
        <taxon>Enterobacteriaceae</taxon>
        <taxon>Escherichia</taxon>
    </lineage>
</organism>
<reference key="1">
    <citation type="journal article" date="1997" name="Science">
        <title>The complete genome sequence of Escherichia coli K-12.</title>
        <authorList>
            <person name="Blattner F.R."/>
            <person name="Plunkett G. III"/>
            <person name="Bloch C.A."/>
            <person name="Perna N.T."/>
            <person name="Burland V."/>
            <person name="Riley M."/>
            <person name="Collado-Vides J."/>
            <person name="Glasner J.D."/>
            <person name="Rode C.K."/>
            <person name="Mayhew G.F."/>
            <person name="Gregor J."/>
            <person name="Davis N.W."/>
            <person name="Kirkpatrick H.A."/>
            <person name="Goeden M.A."/>
            <person name="Rose D.J."/>
            <person name="Mau B."/>
            <person name="Shao Y."/>
        </authorList>
    </citation>
    <scope>NUCLEOTIDE SEQUENCE [LARGE SCALE GENOMIC DNA]</scope>
    <source>
        <strain>K12 / MG1655 / ATCC 47076</strain>
    </source>
</reference>
<reference key="2">
    <citation type="journal article" date="2006" name="Mol. Syst. Biol.">
        <title>Highly accurate genome sequences of Escherichia coli K-12 strains MG1655 and W3110.</title>
        <authorList>
            <person name="Hayashi K."/>
            <person name="Morooka N."/>
            <person name="Yamamoto Y."/>
            <person name="Fujita K."/>
            <person name="Isono K."/>
            <person name="Choi S."/>
            <person name="Ohtsubo E."/>
            <person name="Baba T."/>
            <person name="Wanner B.L."/>
            <person name="Mori H."/>
            <person name="Horiuchi T."/>
        </authorList>
    </citation>
    <scope>NUCLEOTIDE SEQUENCE [LARGE SCALE GENOMIC DNA]</scope>
    <source>
        <strain>K12 / W3110 / ATCC 27325 / DSM 5911</strain>
    </source>
</reference>
<reference key="3">
    <citation type="journal article" date="2005" name="Science">
        <title>Global topology analysis of the Escherichia coli inner membrane proteome.</title>
        <authorList>
            <person name="Daley D.O."/>
            <person name="Rapp M."/>
            <person name="Granseth E."/>
            <person name="Melen K."/>
            <person name="Drew D."/>
            <person name="von Heijne G."/>
        </authorList>
    </citation>
    <scope>TOPOLOGY [LARGE SCALE ANALYSIS]</scope>
    <source>
        <strain>K12 / MG1655 / ATCC 47076</strain>
    </source>
</reference>
<protein>
    <recommendedName>
        <fullName>Inner membrane protein YecN</fullName>
    </recommendedName>
</protein>
<sequence>MVSALYAVLSALLLMKFSFDVVRLRMQYRVAYGDGGFSELQSAIRIHGNAVEYIPIAIVLMLFMEMNGAETWMVHICGIVLLAGRLMHYYGFHHRLFRWRRSGMSATWCALLLMVLANLWYMPWELVFSLR</sequence>
<feature type="chain" id="PRO_0000169081" description="Inner membrane protein YecN">
    <location>
        <begin position="1"/>
        <end position="131"/>
    </location>
</feature>
<feature type="topological domain" description="Cytoplasmic" evidence="1">
    <location>
        <begin position="1"/>
        <end position="107"/>
    </location>
</feature>
<feature type="transmembrane region" description="Helical" evidence="1">
    <location>
        <begin position="108"/>
        <end position="128"/>
    </location>
</feature>
<feature type="topological domain" description="Periplasmic" evidence="1">
    <location>
        <begin position="129"/>
        <end position="131"/>
    </location>
</feature>
<gene>
    <name type="primary">yecN</name>
    <name type="ordered locus">b1869</name>
    <name type="ordered locus">JW5308</name>
</gene>
<accession>P64515</accession>
<accession>P76289</accession>
<accession>Q2MB08</accession>
<evidence type="ECO:0000255" key="1"/>